<protein>
    <recommendedName>
        <fullName>V-set and immunoglobulin domain-containing protein 4</fullName>
    </recommendedName>
    <alternativeName>
        <fullName>Protein Z39Ig</fullName>
    </alternativeName>
</protein>
<feature type="signal peptide" evidence="4">
    <location>
        <begin position="1"/>
        <end position="19"/>
    </location>
</feature>
<feature type="chain" id="PRO_0000015006" description="V-set and immunoglobulin domain-containing protein 4">
    <location>
        <begin position="20"/>
        <end position="399"/>
    </location>
</feature>
<feature type="topological domain" description="Extracellular" evidence="1">
    <location>
        <begin position="20"/>
        <end position="283"/>
    </location>
</feature>
<feature type="transmembrane region" description="Helical" evidence="1">
    <location>
        <begin position="284"/>
        <end position="304"/>
    </location>
</feature>
<feature type="topological domain" description="Cytoplasmic" evidence="1">
    <location>
        <begin position="305"/>
        <end position="399"/>
    </location>
</feature>
<feature type="domain" description="Ig-like 1">
    <location>
        <begin position="21"/>
        <end position="131"/>
    </location>
</feature>
<feature type="domain" description="Ig-like 2">
    <location>
        <begin position="143"/>
        <end position="226"/>
    </location>
</feature>
<feature type="disulfide bond" evidence="2 6">
    <location>
        <begin position="41"/>
        <end position="113"/>
    </location>
</feature>
<feature type="disulfide bond" evidence="2">
    <location>
        <begin position="165"/>
        <end position="211"/>
    </location>
</feature>
<feature type="splice variant" id="VSP_041213" description="In isoform 3." evidence="8">
    <original>LSVSKPTVTTGSGYGFTVPQGMRISLQCQARGSPPISYIWYKQQTNNQEPIKVATLSTLLFKPAVIADSGSYFCTAKGQVGSEQHSDIVKFVVKD</original>
    <variation>H</variation>
    <location>
        <begin position="138"/>
        <end position="232"/>
    </location>
</feature>
<feature type="splice variant" id="VSP_012813" description="In isoform 2." evidence="7">
    <location>
        <begin position="322"/>
        <end position="399"/>
    </location>
</feature>
<feature type="sequence variant" id="VAR_049956" description="In dbSNP:rs34581041.">
    <original>R</original>
    <variation>W</variation>
    <location>
        <position position="108"/>
    </location>
</feature>
<feature type="sequence variant" id="VAR_049957" description="In dbSNP:rs34222730.">
    <original>G</original>
    <variation>E</variation>
    <location>
        <position position="272"/>
    </location>
</feature>
<feature type="sequence variant" id="VAR_049958" description="In dbSNP:rs17315645.">
    <original>G</original>
    <variation>E</variation>
    <location>
        <position position="279"/>
    </location>
</feature>
<feature type="sequence variant" id="VAR_049959" description="In dbSNP:rs35553694.">
    <original>S</original>
    <variation>I</variation>
    <location>
        <position position="397"/>
    </location>
</feature>
<feature type="strand" evidence="11">
    <location>
        <begin position="22"/>
        <end position="24"/>
    </location>
</feature>
<feature type="strand" evidence="10">
    <location>
        <begin position="27"/>
        <end position="32"/>
    </location>
</feature>
<feature type="strand" evidence="10">
    <location>
        <begin position="37"/>
        <end position="39"/>
    </location>
</feature>
<feature type="strand" evidence="10">
    <location>
        <begin position="50"/>
        <end position="58"/>
    </location>
</feature>
<feature type="strand" evidence="10">
    <location>
        <begin position="60"/>
        <end position="63"/>
    </location>
</feature>
<feature type="strand" evidence="10">
    <location>
        <begin position="65"/>
        <end position="71"/>
    </location>
</feature>
<feature type="strand" evidence="10">
    <location>
        <begin position="74"/>
        <end position="77"/>
    </location>
</feature>
<feature type="helix" evidence="10">
    <location>
        <begin position="80"/>
        <end position="82"/>
    </location>
</feature>
<feature type="turn" evidence="10">
    <location>
        <begin position="83"/>
        <end position="85"/>
    </location>
</feature>
<feature type="strand" evidence="10">
    <location>
        <begin position="86"/>
        <end position="88"/>
    </location>
</feature>
<feature type="strand" evidence="10">
    <location>
        <begin position="98"/>
        <end position="100"/>
    </location>
</feature>
<feature type="helix" evidence="10">
    <location>
        <begin position="105"/>
        <end position="107"/>
    </location>
</feature>
<feature type="strand" evidence="10">
    <location>
        <begin position="109"/>
        <end position="118"/>
    </location>
</feature>
<feature type="strand" evidence="10">
    <location>
        <begin position="124"/>
        <end position="136"/>
    </location>
</feature>
<gene>
    <name type="primary">VSIG4</name>
    <name type="synonym">CRIg</name>
    <name type="synonym">Z39IG</name>
    <name type="ORF">UNQ317/PRO362</name>
</gene>
<reference key="1">
    <citation type="journal article" date="2000" name="Biochim. Biophys. Acta">
        <title>Cloning of Z39Ig, a novel gene with immunoglobulin-like domains located on human chromosome X.</title>
        <authorList>
            <person name="Langnaese K."/>
            <person name="Colleaux L."/>
            <person name="Kloos D.U."/>
            <person name="Fontes M."/>
            <person name="Wieacker P."/>
        </authorList>
    </citation>
    <scope>NUCLEOTIDE SEQUENCE [MRNA] (ISOFORM 1)</scope>
    <scope>TISSUE SPECIFICITY</scope>
</reference>
<reference key="2">
    <citation type="journal article" date="2003" name="Genome Res.">
        <title>The secreted protein discovery initiative (SPDI), a large-scale effort to identify novel human secreted and transmembrane proteins: a bioinformatics assessment.</title>
        <authorList>
            <person name="Clark H.F."/>
            <person name="Gurney A.L."/>
            <person name="Abaya E."/>
            <person name="Baker K."/>
            <person name="Baldwin D.T."/>
            <person name="Brush J."/>
            <person name="Chen J."/>
            <person name="Chow B."/>
            <person name="Chui C."/>
            <person name="Crowley C."/>
            <person name="Currell B."/>
            <person name="Deuel B."/>
            <person name="Dowd P."/>
            <person name="Eaton D."/>
            <person name="Foster J.S."/>
            <person name="Grimaldi C."/>
            <person name="Gu Q."/>
            <person name="Hass P.E."/>
            <person name="Heldens S."/>
            <person name="Huang A."/>
            <person name="Kim H.S."/>
            <person name="Klimowski L."/>
            <person name="Jin Y."/>
            <person name="Johnson S."/>
            <person name="Lee J."/>
            <person name="Lewis L."/>
            <person name="Liao D."/>
            <person name="Mark M.R."/>
            <person name="Robbie E."/>
            <person name="Sanchez C."/>
            <person name="Schoenfeld J."/>
            <person name="Seshagiri S."/>
            <person name="Simmons L."/>
            <person name="Singh J."/>
            <person name="Smith V."/>
            <person name="Stinson J."/>
            <person name="Vagts A."/>
            <person name="Vandlen R.L."/>
            <person name="Watanabe C."/>
            <person name="Wieand D."/>
            <person name="Woods K."/>
            <person name="Xie M.-H."/>
            <person name="Yansura D.G."/>
            <person name="Yi S."/>
            <person name="Yu G."/>
            <person name="Yuan J."/>
            <person name="Zhang M."/>
            <person name="Zhang Z."/>
            <person name="Goddard A.D."/>
            <person name="Wood W.I."/>
            <person name="Godowski P.J."/>
            <person name="Gray A.M."/>
        </authorList>
    </citation>
    <scope>NUCLEOTIDE SEQUENCE [LARGE SCALE MRNA] (ISOFORM 2)</scope>
</reference>
<reference key="3">
    <citation type="submission" date="2004-07" db="EMBL/GenBank/DDBJ databases">
        <title>Full-length cDNA libraries and normalization.</title>
        <authorList>
            <person name="Li W.B."/>
            <person name="Gruber C."/>
            <person name="Jessee J."/>
            <person name="Polayes D."/>
        </authorList>
    </citation>
    <scope>NUCLEOTIDE SEQUENCE [LARGE SCALE MRNA] (ISOFORM 3)</scope>
    <source>
        <tissue>Placenta</tissue>
    </source>
</reference>
<reference key="4">
    <citation type="journal article" date="2005" name="Nature">
        <title>The DNA sequence of the human X chromosome.</title>
        <authorList>
            <person name="Ross M.T."/>
            <person name="Grafham D.V."/>
            <person name="Coffey A.J."/>
            <person name="Scherer S."/>
            <person name="McLay K."/>
            <person name="Muzny D."/>
            <person name="Platzer M."/>
            <person name="Howell G.R."/>
            <person name="Burrows C."/>
            <person name="Bird C.P."/>
            <person name="Frankish A."/>
            <person name="Lovell F.L."/>
            <person name="Howe K.L."/>
            <person name="Ashurst J.L."/>
            <person name="Fulton R.S."/>
            <person name="Sudbrak R."/>
            <person name="Wen G."/>
            <person name="Jones M.C."/>
            <person name="Hurles M.E."/>
            <person name="Andrews T.D."/>
            <person name="Scott C.E."/>
            <person name="Searle S."/>
            <person name="Ramser J."/>
            <person name="Whittaker A."/>
            <person name="Deadman R."/>
            <person name="Carter N.P."/>
            <person name="Hunt S.E."/>
            <person name="Chen R."/>
            <person name="Cree A."/>
            <person name="Gunaratne P."/>
            <person name="Havlak P."/>
            <person name="Hodgson A."/>
            <person name="Metzker M.L."/>
            <person name="Richards S."/>
            <person name="Scott G."/>
            <person name="Steffen D."/>
            <person name="Sodergren E."/>
            <person name="Wheeler D.A."/>
            <person name="Worley K.C."/>
            <person name="Ainscough R."/>
            <person name="Ambrose K.D."/>
            <person name="Ansari-Lari M.A."/>
            <person name="Aradhya S."/>
            <person name="Ashwell R.I."/>
            <person name="Babbage A.K."/>
            <person name="Bagguley C.L."/>
            <person name="Ballabio A."/>
            <person name="Banerjee R."/>
            <person name="Barker G.E."/>
            <person name="Barlow K.F."/>
            <person name="Barrett I.P."/>
            <person name="Bates K.N."/>
            <person name="Beare D.M."/>
            <person name="Beasley H."/>
            <person name="Beasley O."/>
            <person name="Beck A."/>
            <person name="Bethel G."/>
            <person name="Blechschmidt K."/>
            <person name="Brady N."/>
            <person name="Bray-Allen S."/>
            <person name="Bridgeman A.M."/>
            <person name="Brown A.J."/>
            <person name="Brown M.J."/>
            <person name="Bonnin D."/>
            <person name="Bruford E.A."/>
            <person name="Buhay C."/>
            <person name="Burch P."/>
            <person name="Burford D."/>
            <person name="Burgess J."/>
            <person name="Burrill W."/>
            <person name="Burton J."/>
            <person name="Bye J.M."/>
            <person name="Carder C."/>
            <person name="Carrel L."/>
            <person name="Chako J."/>
            <person name="Chapman J.C."/>
            <person name="Chavez D."/>
            <person name="Chen E."/>
            <person name="Chen G."/>
            <person name="Chen Y."/>
            <person name="Chen Z."/>
            <person name="Chinault C."/>
            <person name="Ciccodicola A."/>
            <person name="Clark S.Y."/>
            <person name="Clarke G."/>
            <person name="Clee C.M."/>
            <person name="Clegg S."/>
            <person name="Clerc-Blankenburg K."/>
            <person name="Clifford K."/>
            <person name="Cobley V."/>
            <person name="Cole C.G."/>
            <person name="Conquer J.S."/>
            <person name="Corby N."/>
            <person name="Connor R.E."/>
            <person name="David R."/>
            <person name="Davies J."/>
            <person name="Davis C."/>
            <person name="Davis J."/>
            <person name="Delgado O."/>
            <person name="Deshazo D."/>
            <person name="Dhami P."/>
            <person name="Ding Y."/>
            <person name="Dinh H."/>
            <person name="Dodsworth S."/>
            <person name="Draper H."/>
            <person name="Dugan-Rocha S."/>
            <person name="Dunham A."/>
            <person name="Dunn M."/>
            <person name="Durbin K.J."/>
            <person name="Dutta I."/>
            <person name="Eades T."/>
            <person name="Ellwood M."/>
            <person name="Emery-Cohen A."/>
            <person name="Errington H."/>
            <person name="Evans K.L."/>
            <person name="Faulkner L."/>
            <person name="Francis F."/>
            <person name="Frankland J."/>
            <person name="Fraser A.E."/>
            <person name="Galgoczy P."/>
            <person name="Gilbert J."/>
            <person name="Gill R."/>
            <person name="Gloeckner G."/>
            <person name="Gregory S.G."/>
            <person name="Gribble S."/>
            <person name="Griffiths C."/>
            <person name="Grocock R."/>
            <person name="Gu Y."/>
            <person name="Gwilliam R."/>
            <person name="Hamilton C."/>
            <person name="Hart E.A."/>
            <person name="Hawes A."/>
            <person name="Heath P.D."/>
            <person name="Heitmann K."/>
            <person name="Hennig S."/>
            <person name="Hernandez J."/>
            <person name="Hinzmann B."/>
            <person name="Ho S."/>
            <person name="Hoffs M."/>
            <person name="Howden P.J."/>
            <person name="Huckle E.J."/>
            <person name="Hume J."/>
            <person name="Hunt P.J."/>
            <person name="Hunt A.R."/>
            <person name="Isherwood J."/>
            <person name="Jacob L."/>
            <person name="Johnson D."/>
            <person name="Jones S."/>
            <person name="de Jong P.J."/>
            <person name="Joseph S.S."/>
            <person name="Keenan S."/>
            <person name="Kelly S."/>
            <person name="Kershaw J.K."/>
            <person name="Khan Z."/>
            <person name="Kioschis P."/>
            <person name="Klages S."/>
            <person name="Knights A.J."/>
            <person name="Kosiura A."/>
            <person name="Kovar-Smith C."/>
            <person name="Laird G.K."/>
            <person name="Langford C."/>
            <person name="Lawlor S."/>
            <person name="Leversha M."/>
            <person name="Lewis L."/>
            <person name="Liu W."/>
            <person name="Lloyd C."/>
            <person name="Lloyd D.M."/>
            <person name="Loulseged H."/>
            <person name="Loveland J.E."/>
            <person name="Lovell J.D."/>
            <person name="Lozado R."/>
            <person name="Lu J."/>
            <person name="Lyne R."/>
            <person name="Ma J."/>
            <person name="Maheshwari M."/>
            <person name="Matthews L.H."/>
            <person name="McDowall J."/>
            <person name="McLaren S."/>
            <person name="McMurray A."/>
            <person name="Meidl P."/>
            <person name="Meitinger T."/>
            <person name="Milne S."/>
            <person name="Miner G."/>
            <person name="Mistry S.L."/>
            <person name="Morgan M."/>
            <person name="Morris S."/>
            <person name="Mueller I."/>
            <person name="Mullikin J.C."/>
            <person name="Nguyen N."/>
            <person name="Nordsiek G."/>
            <person name="Nyakatura G."/>
            <person name="O'dell C.N."/>
            <person name="Okwuonu G."/>
            <person name="Palmer S."/>
            <person name="Pandian R."/>
            <person name="Parker D."/>
            <person name="Parrish J."/>
            <person name="Pasternak S."/>
            <person name="Patel D."/>
            <person name="Pearce A.V."/>
            <person name="Pearson D.M."/>
            <person name="Pelan S.E."/>
            <person name="Perez L."/>
            <person name="Porter K.M."/>
            <person name="Ramsey Y."/>
            <person name="Reichwald K."/>
            <person name="Rhodes S."/>
            <person name="Ridler K.A."/>
            <person name="Schlessinger D."/>
            <person name="Schueler M.G."/>
            <person name="Sehra H.K."/>
            <person name="Shaw-Smith C."/>
            <person name="Shen H."/>
            <person name="Sheridan E.M."/>
            <person name="Shownkeen R."/>
            <person name="Skuce C.D."/>
            <person name="Smith M.L."/>
            <person name="Sotheran E.C."/>
            <person name="Steingruber H.E."/>
            <person name="Steward C.A."/>
            <person name="Storey R."/>
            <person name="Swann R.M."/>
            <person name="Swarbreck D."/>
            <person name="Tabor P.E."/>
            <person name="Taudien S."/>
            <person name="Taylor T."/>
            <person name="Teague B."/>
            <person name="Thomas K."/>
            <person name="Thorpe A."/>
            <person name="Timms K."/>
            <person name="Tracey A."/>
            <person name="Trevanion S."/>
            <person name="Tromans A.C."/>
            <person name="d'Urso M."/>
            <person name="Verduzco D."/>
            <person name="Villasana D."/>
            <person name="Waldron L."/>
            <person name="Wall M."/>
            <person name="Wang Q."/>
            <person name="Warren J."/>
            <person name="Warry G.L."/>
            <person name="Wei X."/>
            <person name="West A."/>
            <person name="Whitehead S.L."/>
            <person name="Whiteley M.N."/>
            <person name="Wilkinson J.E."/>
            <person name="Willey D.L."/>
            <person name="Williams G."/>
            <person name="Williams L."/>
            <person name="Williamson A."/>
            <person name="Williamson H."/>
            <person name="Wilming L."/>
            <person name="Woodmansey R.L."/>
            <person name="Wray P.W."/>
            <person name="Yen J."/>
            <person name="Zhang J."/>
            <person name="Zhou J."/>
            <person name="Zoghbi H."/>
            <person name="Zorilla S."/>
            <person name="Buck D."/>
            <person name="Reinhardt R."/>
            <person name="Poustka A."/>
            <person name="Rosenthal A."/>
            <person name="Lehrach H."/>
            <person name="Meindl A."/>
            <person name="Minx P.J."/>
            <person name="Hillier L.W."/>
            <person name="Willard H.F."/>
            <person name="Wilson R.K."/>
            <person name="Waterston R.H."/>
            <person name="Rice C.M."/>
            <person name="Vaudin M."/>
            <person name="Coulson A."/>
            <person name="Nelson D.L."/>
            <person name="Weinstock G."/>
            <person name="Sulston J.E."/>
            <person name="Durbin R.M."/>
            <person name="Hubbard T."/>
            <person name="Gibbs R.A."/>
            <person name="Beck S."/>
            <person name="Rogers J."/>
            <person name="Bentley D.R."/>
        </authorList>
    </citation>
    <scope>NUCLEOTIDE SEQUENCE [LARGE SCALE GENOMIC DNA]</scope>
</reference>
<reference key="5">
    <citation type="journal article" date="2004" name="Genome Res.">
        <title>The status, quality, and expansion of the NIH full-length cDNA project: the Mammalian Gene Collection (MGC).</title>
        <authorList>
            <consortium name="The MGC Project Team"/>
        </authorList>
    </citation>
    <scope>NUCLEOTIDE SEQUENCE [LARGE SCALE MRNA] (ISOFORM 1)</scope>
    <source>
        <tissue>Brain</tissue>
    </source>
</reference>
<reference key="6">
    <citation type="journal article" date="2004" name="Protein Sci.">
        <title>Signal peptide prediction based on analysis of experimentally verified cleavage sites.</title>
        <authorList>
            <person name="Zhang Z."/>
            <person name="Henzel W.J."/>
        </authorList>
    </citation>
    <scope>PROTEIN SEQUENCE OF 20-34</scope>
</reference>
<reference key="7">
    <citation type="journal article" date="2006" name="J. Clin. Invest.">
        <title>VSIG4, a B7 family-related protein, is a negative regulator of T cell activation.</title>
        <authorList>
            <person name="Vogt L."/>
            <person name="Schmitz N."/>
            <person name="Kurrer M.O."/>
            <person name="Bauer M."/>
            <person name="Hinton H.I."/>
            <person name="Behnke S."/>
            <person name="Gatto D."/>
            <person name="Sebbel P."/>
            <person name="Beerli R.R."/>
            <person name="Sonderegger I."/>
            <person name="Kopf M."/>
            <person name="Saudan P."/>
            <person name="Bachmann M.F."/>
        </authorList>
    </citation>
    <scope>FUNCTION</scope>
    <scope>TISSUE SPECIFICITY</scope>
</reference>
<reference key="8">
    <citation type="journal article" date="2006" name="Nature">
        <title>Structure of C3b in complex with CRIg gives insights into regulation of complement activation.</title>
        <authorList>
            <person name="Wiesmann C."/>
            <person name="Katschke K.J."/>
            <person name="Yin J."/>
            <person name="Helmy K.Y."/>
            <person name="Steffek M."/>
            <person name="Fairbrother W.J."/>
            <person name="McCallum S.A."/>
            <person name="Embuscado L."/>
            <person name="DeForge L."/>
            <person name="Hass P.E."/>
            <person name="van Lookeren Campagne M."/>
        </authorList>
    </citation>
    <scope>X-RAY CRYSTALLOGRAPHY (1.2 ANGSTROMS) OF 19-137 IN COMPLEX WITH C3B AND C3C</scope>
    <scope>FUNCTION</scope>
    <scope>DISULFIDE BOND</scope>
</reference>
<name>VSIG4_HUMAN</name>
<comment type="function">
    <text evidence="5 6">Phagocytic receptor, strong negative regulator of T-cell proliferation and IL2 production. Potent inhibitor of the alternative complement pathway convertases.</text>
</comment>
<comment type="interaction">
    <interactant intactId="EBI-903131">
        <id>Q9Y279</id>
    </interactant>
    <interactant intactId="EBI-743099">
        <id>Q969F0</id>
        <label>FATE1</label>
    </interactant>
    <organismsDiffer>false</organismsDiffer>
    <experiments>3</experiments>
</comment>
<comment type="interaction">
    <interactant intactId="EBI-903131">
        <id>Q9Y279</id>
    </interactant>
    <interactant intactId="EBI-10266796">
        <id>Q8N5M9</id>
        <label>JAGN1</label>
    </interactant>
    <organismsDiffer>false</organismsDiffer>
    <experiments>3</experiments>
</comment>
<comment type="interaction">
    <interactant intactId="EBI-903131">
        <id>Q9Y279</id>
    </interactant>
    <interactant intactId="EBI-10191195">
        <id>O95183</id>
        <label>VAMP5</label>
    </interactant>
    <organismsDiffer>false</organismsDiffer>
    <experiments>3</experiments>
</comment>
<comment type="interaction">
    <interactant intactId="EBI-903144">
        <id>Q9Y279-1</id>
    </interactant>
    <interactant intactId="EBI-905851">
        <id>P01024</id>
        <label>C3</label>
    </interactant>
    <organismsDiffer>false</organismsDiffer>
    <experiments>5</experiments>
</comment>
<comment type="interaction">
    <interactant intactId="EBI-903148">
        <id>Q9Y279-2</id>
    </interactant>
    <interactant intactId="EBI-905851">
        <id>P01024</id>
        <label>C3</label>
    </interactant>
    <organismsDiffer>false</organismsDiffer>
    <experiments>2</experiments>
</comment>
<comment type="subcellular location">
    <subcellularLocation>
        <location evidence="9">Membrane</location>
        <topology evidence="9">Single-pass type I membrane protein</topology>
    </subcellularLocation>
</comment>
<comment type="alternative products">
    <event type="alternative splicing"/>
    <isoform>
        <id>Q9Y279-1</id>
        <name>1</name>
        <sequence type="displayed"/>
    </isoform>
    <isoform>
        <id>Q9Y279-2</id>
        <name>2</name>
        <sequence type="described" ref="VSP_012813"/>
    </isoform>
    <isoform>
        <id>Q9Y279-3</id>
        <name>3</name>
        <sequence type="described" ref="VSP_041213"/>
    </isoform>
</comment>
<comment type="tissue specificity">
    <text evidence="3 5">Abundantly expressed in several fetal tissues. In adult tissues, highest expression in lung and placenta. Expressed in resting macrophages.</text>
</comment>
<proteinExistence type="evidence at protein level"/>
<sequence length="399" mass="43987">MGILLGLLLLGHLTVDTYGRPILEVPESVTGPWKGDVNLPCTYDPLQGYTQVLVKWLVQRGSDPVTIFLRDSSGDHIQQAKYQGRLHVSHKVPGDVSLQLSTLEMDDRSHYTCEVTWQTPDGNQVVRDKITELRVQKLSVSKPTVTTGSGYGFTVPQGMRISLQCQARGSPPISYIWYKQQTNNQEPIKVATLSTLLFKPAVIADSGSYFCTAKGQVGSEQHSDIVKFVVKDSSKLLKTKTEAPTTMTYPLKATSTVKQSWDWTTDMDGYLGETSAGPGKSLPVFAIILIISLCCMVVFTMAYIMLCRKTSQQEHVYEAARAHAREANDSGETMRVAIFASGCSSDEPTSQNLGNNYSDEPCIGQEYQIIAQINGNYARLLDTVPLDYEFLATEGKSVC</sequence>
<keyword id="KW-0002">3D-structure</keyword>
<keyword id="KW-0025">Alternative splicing</keyword>
<keyword id="KW-0179">Complement alternate pathway</keyword>
<keyword id="KW-0903">Direct protein sequencing</keyword>
<keyword id="KW-1015">Disulfide bond</keyword>
<keyword id="KW-0391">Immunity</keyword>
<keyword id="KW-0393">Immunoglobulin domain</keyword>
<keyword id="KW-0399">Innate immunity</keyword>
<keyword id="KW-0472">Membrane</keyword>
<keyword id="KW-1267">Proteomics identification</keyword>
<keyword id="KW-1185">Reference proteome</keyword>
<keyword id="KW-0677">Repeat</keyword>
<keyword id="KW-0732">Signal</keyword>
<keyword id="KW-0812">Transmembrane</keyword>
<keyword id="KW-1133">Transmembrane helix</keyword>
<dbReference type="EMBL" id="AJ132502">
    <property type="protein sequence ID" value="CAB51536.1"/>
    <property type="molecule type" value="mRNA"/>
</dbReference>
<dbReference type="EMBL" id="AY358341">
    <property type="protein sequence ID" value="AAQ88707.1"/>
    <property type="molecule type" value="mRNA"/>
</dbReference>
<dbReference type="EMBL" id="AL034397">
    <property type="status" value="NOT_ANNOTATED_CDS"/>
    <property type="molecule type" value="Genomic_DNA"/>
</dbReference>
<dbReference type="EMBL" id="CR607860">
    <property type="status" value="NOT_ANNOTATED_CDS"/>
    <property type="molecule type" value="mRNA"/>
</dbReference>
<dbReference type="EMBL" id="BC010525">
    <property type="protein sequence ID" value="AAH10525.1"/>
    <property type="molecule type" value="mRNA"/>
</dbReference>
<dbReference type="CCDS" id="CCDS14383.1">
    <molecule id="Q9Y279-1"/>
</dbReference>
<dbReference type="CCDS" id="CCDS48132.1">
    <molecule id="Q9Y279-3"/>
</dbReference>
<dbReference type="CCDS" id="CCDS55435.1">
    <molecule id="Q9Y279-2"/>
</dbReference>
<dbReference type="RefSeq" id="NP_001093901.1">
    <molecule id="Q9Y279-3"/>
    <property type="nucleotide sequence ID" value="NM_001100431.2"/>
</dbReference>
<dbReference type="RefSeq" id="NP_001171759.1">
    <molecule id="Q9Y279-2"/>
    <property type="nucleotide sequence ID" value="NM_001184830.2"/>
</dbReference>
<dbReference type="RefSeq" id="NP_001171760.1">
    <property type="nucleotide sequence ID" value="NM_001184831.1"/>
</dbReference>
<dbReference type="RefSeq" id="NP_001244332.1">
    <property type="nucleotide sequence ID" value="NM_001257403.1"/>
</dbReference>
<dbReference type="RefSeq" id="NP_009199.1">
    <molecule id="Q9Y279-1"/>
    <property type="nucleotide sequence ID" value="NM_007268.3"/>
</dbReference>
<dbReference type="PDB" id="2ICC">
    <property type="method" value="X-ray"/>
    <property type="resolution" value="1.20 A"/>
    <property type="chains" value="A=19-137"/>
</dbReference>
<dbReference type="PDB" id="2ICE">
    <property type="method" value="X-ray"/>
    <property type="resolution" value="3.10 A"/>
    <property type="chains" value="S/T=19-137"/>
</dbReference>
<dbReference type="PDB" id="2ICF">
    <property type="method" value="X-ray"/>
    <property type="resolution" value="4.10 A"/>
    <property type="chains" value="S=19-137"/>
</dbReference>
<dbReference type="PDB" id="5IMK">
    <property type="method" value="X-ray"/>
    <property type="resolution" value="1.23 A"/>
    <property type="chains" value="A=19-232"/>
</dbReference>
<dbReference type="PDB" id="5IML">
    <property type="method" value="X-ray"/>
    <property type="resolution" value="1.80 A"/>
    <property type="chains" value="A=19-232"/>
</dbReference>
<dbReference type="PDB" id="8TE5">
    <property type="method" value="X-ray"/>
    <property type="resolution" value="1.50 A"/>
    <property type="chains" value="A=20-137"/>
</dbReference>
<dbReference type="PDB" id="8TE6">
    <property type="method" value="X-ray"/>
    <property type="resolution" value="1.25 A"/>
    <property type="chains" value="A=20-137"/>
</dbReference>
<dbReference type="PDBsum" id="2ICC"/>
<dbReference type="PDBsum" id="2ICE"/>
<dbReference type="PDBsum" id="2ICF"/>
<dbReference type="PDBsum" id="5IMK"/>
<dbReference type="PDBsum" id="5IML"/>
<dbReference type="PDBsum" id="8TE5"/>
<dbReference type="PDBsum" id="8TE6"/>
<dbReference type="SMR" id="Q9Y279"/>
<dbReference type="BioGRID" id="116455">
    <property type="interactions" value="207"/>
</dbReference>
<dbReference type="FunCoup" id="Q9Y279">
    <property type="interactions" value="122"/>
</dbReference>
<dbReference type="IntAct" id="Q9Y279">
    <property type="interactions" value="158"/>
</dbReference>
<dbReference type="STRING" id="9606.ENSP00000363869"/>
<dbReference type="GlyCosmos" id="Q9Y279">
    <property type="glycosylation" value="1 site, 1 glycan"/>
</dbReference>
<dbReference type="GlyGen" id="Q9Y279">
    <property type="glycosylation" value="1 site, 1 O-linked glycan (1 site)"/>
</dbReference>
<dbReference type="iPTMnet" id="Q9Y279"/>
<dbReference type="PhosphoSitePlus" id="Q9Y279"/>
<dbReference type="SwissPalm" id="Q9Y279"/>
<dbReference type="BioMuta" id="VSIG4"/>
<dbReference type="DMDM" id="59799152"/>
<dbReference type="jPOST" id="Q9Y279"/>
<dbReference type="MassIVE" id="Q9Y279"/>
<dbReference type="PaxDb" id="9606-ENSP00000363869"/>
<dbReference type="PeptideAtlas" id="Q9Y279"/>
<dbReference type="ProteomicsDB" id="85683">
    <molecule id="Q9Y279-1"/>
</dbReference>
<dbReference type="ProteomicsDB" id="85684">
    <molecule id="Q9Y279-2"/>
</dbReference>
<dbReference type="ProteomicsDB" id="85685">
    <molecule id="Q9Y279-3"/>
</dbReference>
<dbReference type="ABCD" id="Q9Y279">
    <property type="antibodies" value="1 sequenced antibody"/>
</dbReference>
<dbReference type="Antibodypedia" id="13115">
    <property type="antibodies" value="221 antibodies from 34 providers"/>
</dbReference>
<dbReference type="DNASU" id="11326"/>
<dbReference type="Ensembl" id="ENST00000374737.9">
    <molecule id="Q9Y279-1"/>
    <property type="protein sequence ID" value="ENSP00000363869.4"/>
    <property type="gene ID" value="ENSG00000155659.15"/>
</dbReference>
<dbReference type="Ensembl" id="ENST00000412866.2">
    <molecule id="Q9Y279-3"/>
    <property type="protein sequence ID" value="ENSP00000394143.2"/>
    <property type="gene ID" value="ENSG00000155659.15"/>
</dbReference>
<dbReference type="Ensembl" id="ENST00000455586.6">
    <molecule id="Q9Y279-2"/>
    <property type="protein sequence ID" value="ENSP00000411581.2"/>
    <property type="gene ID" value="ENSG00000155659.15"/>
</dbReference>
<dbReference type="GeneID" id="11326"/>
<dbReference type="KEGG" id="hsa:11326"/>
<dbReference type="MANE-Select" id="ENST00000374737.9">
    <property type="protein sequence ID" value="ENSP00000363869.4"/>
    <property type="RefSeq nucleotide sequence ID" value="NM_007268.3"/>
    <property type="RefSeq protein sequence ID" value="NP_009199.1"/>
</dbReference>
<dbReference type="UCSC" id="uc004dwh.3">
    <molecule id="Q9Y279-1"/>
    <property type="organism name" value="human"/>
</dbReference>
<dbReference type="AGR" id="HGNC:17032"/>
<dbReference type="CTD" id="11326"/>
<dbReference type="DisGeNET" id="11326"/>
<dbReference type="GeneCards" id="VSIG4"/>
<dbReference type="HGNC" id="HGNC:17032">
    <property type="gene designation" value="VSIG4"/>
</dbReference>
<dbReference type="HPA" id="ENSG00000155659">
    <property type="expression patterns" value="Tissue enhanced (lung)"/>
</dbReference>
<dbReference type="MalaCards" id="VSIG4"/>
<dbReference type="MIM" id="300353">
    <property type="type" value="gene"/>
</dbReference>
<dbReference type="neXtProt" id="NX_Q9Y279"/>
<dbReference type="OpenTargets" id="ENSG00000155659"/>
<dbReference type="PharmGKB" id="PA134986421"/>
<dbReference type="VEuPathDB" id="HostDB:ENSG00000155659"/>
<dbReference type="eggNOG" id="ENOG502S07Y">
    <property type="taxonomic scope" value="Eukaryota"/>
</dbReference>
<dbReference type="GeneTree" id="ENSGT00390000001432"/>
<dbReference type="HOGENOM" id="CLU_058836_0_0_1"/>
<dbReference type="InParanoid" id="Q9Y279"/>
<dbReference type="OMA" id="DYSEDPC"/>
<dbReference type="PAN-GO" id="Q9Y279">
    <property type="GO annotations" value="4 GO annotations based on evolutionary models"/>
</dbReference>
<dbReference type="PhylomeDB" id="Q9Y279"/>
<dbReference type="TreeFam" id="TF336175"/>
<dbReference type="PathwayCommons" id="Q9Y279"/>
<dbReference type="SignaLink" id="Q9Y279"/>
<dbReference type="BioGRID-ORCS" id="11326">
    <property type="hits" value="9 hits in 770 CRISPR screens"/>
</dbReference>
<dbReference type="ChiTaRS" id="VSIG4">
    <property type="organism name" value="human"/>
</dbReference>
<dbReference type="EvolutionaryTrace" id="Q9Y279"/>
<dbReference type="GenomeRNAi" id="11326"/>
<dbReference type="Pharos" id="Q9Y279">
    <property type="development level" value="Tbio"/>
</dbReference>
<dbReference type="PRO" id="PR:Q9Y279"/>
<dbReference type="Proteomes" id="UP000005640">
    <property type="component" value="Chromosome X"/>
</dbReference>
<dbReference type="RNAct" id="Q9Y279">
    <property type="molecule type" value="protein"/>
</dbReference>
<dbReference type="Bgee" id="ENSG00000155659">
    <property type="expression patterns" value="Expressed in right lung and 178 other cell types or tissues"/>
</dbReference>
<dbReference type="ExpressionAtlas" id="Q9Y279">
    <property type="expression patterns" value="baseline and differential"/>
</dbReference>
<dbReference type="GO" id="GO:0016020">
    <property type="term" value="C:membrane"/>
    <property type="evidence" value="ECO:0007669"/>
    <property type="project" value="UniProtKB-SubCell"/>
</dbReference>
<dbReference type="GO" id="GO:0032991">
    <property type="term" value="C:protein-containing complex"/>
    <property type="evidence" value="ECO:0000353"/>
    <property type="project" value="UniProtKB"/>
</dbReference>
<dbReference type="GO" id="GO:0001851">
    <property type="term" value="F:complement component C3b binding"/>
    <property type="evidence" value="ECO:0000353"/>
    <property type="project" value="UniProtKB"/>
</dbReference>
<dbReference type="GO" id="GO:0006957">
    <property type="term" value="P:complement activation, alternative pathway"/>
    <property type="evidence" value="ECO:0007669"/>
    <property type="project" value="UniProtKB-KW"/>
</dbReference>
<dbReference type="GO" id="GO:0045957">
    <property type="term" value="P:negative regulation of complement activation, alternative pathway"/>
    <property type="evidence" value="ECO:0000353"/>
    <property type="project" value="UniProtKB"/>
</dbReference>
<dbReference type="GO" id="GO:0032703">
    <property type="term" value="P:negative regulation of interleukin-2 production"/>
    <property type="evidence" value="ECO:0000318"/>
    <property type="project" value="GO_Central"/>
</dbReference>
<dbReference type="GO" id="GO:0043031">
    <property type="term" value="P:negative regulation of macrophage activation"/>
    <property type="evidence" value="ECO:0007669"/>
    <property type="project" value="InterPro"/>
</dbReference>
<dbReference type="GO" id="GO:0042130">
    <property type="term" value="P:negative regulation of T cell proliferation"/>
    <property type="evidence" value="ECO:0000318"/>
    <property type="project" value="GO_Central"/>
</dbReference>
<dbReference type="CDD" id="cd16082">
    <property type="entry name" value="IgC_CRIg"/>
    <property type="match status" value="1"/>
</dbReference>
<dbReference type="CDD" id="cd16089">
    <property type="entry name" value="IgV_CRIg"/>
    <property type="match status" value="1"/>
</dbReference>
<dbReference type="FunFam" id="2.60.40.10:FF:002102">
    <property type="entry name" value="V-set and immunoglobulin domain containing 4"/>
    <property type="match status" value="1"/>
</dbReference>
<dbReference type="FunFam" id="2.60.40.10:FF:001584">
    <property type="entry name" value="V-set and immunoglobulin domain-containing 4"/>
    <property type="match status" value="1"/>
</dbReference>
<dbReference type="Gene3D" id="2.60.40.10">
    <property type="entry name" value="Immunoglobulins"/>
    <property type="match status" value="2"/>
</dbReference>
<dbReference type="InterPro" id="IPR007110">
    <property type="entry name" value="Ig-like_dom"/>
</dbReference>
<dbReference type="InterPro" id="IPR036179">
    <property type="entry name" value="Ig-like_dom_sf"/>
</dbReference>
<dbReference type="InterPro" id="IPR013783">
    <property type="entry name" value="Ig-like_fold"/>
</dbReference>
<dbReference type="InterPro" id="IPR003599">
    <property type="entry name" value="Ig_sub"/>
</dbReference>
<dbReference type="InterPro" id="IPR003598">
    <property type="entry name" value="Ig_sub2"/>
</dbReference>
<dbReference type="InterPro" id="IPR013106">
    <property type="entry name" value="Ig_V-set"/>
</dbReference>
<dbReference type="InterPro" id="IPR039939">
    <property type="entry name" value="VSIG4"/>
</dbReference>
<dbReference type="InterPro" id="IPR039944">
    <property type="entry name" value="VSIG4_IgV"/>
</dbReference>
<dbReference type="PANTHER" id="PTHR15466">
    <property type="entry name" value="V-SET AND IMMUNOGLOBULIN DOMAIN CONTAINING 4"/>
    <property type="match status" value="1"/>
</dbReference>
<dbReference type="PANTHER" id="PTHR15466:SF2">
    <property type="entry name" value="V-SET AND IMMUNOGLOBULIN DOMAIN-CONTAINING PROTEIN 4"/>
    <property type="match status" value="1"/>
</dbReference>
<dbReference type="Pfam" id="PF13927">
    <property type="entry name" value="Ig_3"/>
    <property type="match status" value="1"/>
</dbReference>
<dbReference type="Pfam" id="PF07686">
    <property type="entry name" value="V-set"/>
    <property type="match status" value="1"/>
</dbReference>
<dbReference type="SMART" id="SM00409">
    <property type="entry name" value="IG"/>
    <property type="match status" value="2"/>
</dbReference>
<dbReference type="SMART" id="SM00408">
    <property type="entry name" value="IGc2"/>
    <property type="match status" value="1"/>
</dbReference>
<dbReference type="SMART" id="SM00406">
    <property type="entry name" value="IGv"/>
    <property type="match status" value="1"/>
</dbReference>
<dbReference type="SUPFAM" id="SSF48726">
    <property type="entry name" value="Immunoglobulin"/>
    <property type="match status" value="2"/>
</dbReference>
<dbReference type="PROSITE" id="PS50835">
    <property type="entry name" value="IG_LIKE"/>
    <property type="match status" value="2"/>
</dbReference>
<organism>
    <name type="scientific">Homo sapiens</name>
    <name type="common">Human</name>
    <dbReference type="NCBI Taxonomy" id="9606"/>
    <lineage>
        <taxon>Eukaryota</taxon>
        <taxon>Metazoa</taxon>
        <taxon>Chordata</taxon>
        <taxon>Craniata</taxon>
        <taxon>Vertebrata</taxon>
        <taxon>Euteleostomi</taxon>
        <taxon>Mammalia</taxon>
        <taxon>Eutheria</taxon>
        <taxon>Euarchontoglires</taxon>
        <taxon>Primates</taxon>
        <taxon>Haplorrhini</taxon>
        <taxon>Catarrhini</taxon>
        <taxon>Hominidae</taxon>
        <taxon>Homo</taxon>
    </lineage>
</organism>
<accession>Q9Y279</accession>
<accession>Q6UXI4</accession>
<evidence type="ECO:0000255" key="1"/>
<evidence type="ECO:0000255" key="2">
    <source>
        <dbReference type="PROSITE-ProRule" id="PRU00114"/>
    </source>
</evidence>
<evidence type="ECO:0000269" key="3">
    <source>
    </source>
</evidence>
<evidence type="ECO:0000269" key="4">
    <source>
    </source>
</evidence>
<evidence type="ECO:0000269" key="5">
    <source>
    </source>
</evidence>
<evidence type="ECO:0000269" key="6">
    <source>
    </source>
</evidence>
<evidence type="ECO:0000303" key="7">
    <source>
    </source>
</evidence>
<evidence type="ECO:0000303" key="8">
    <source ref="3"/>
</evidence>
<evidence type="ECO:0000305" key="9"/>
<evidence type="ECO:0007829" key="10">
    <source>
        <dbReference type="PDB" id="2ICC"/>
    </source>
</evidence>
<evidence type="ECO:0007829" key="11">
    <source>
        <dbReference type="PDB" id="5IMK"/>
    </source>
</evidence>